<reference key="1">
    <citation type="journal article" date="2010" name="FEBS J.">
        <title>Pectin methylesterases of pollen tissue, a major allergen in olive tree.</title>
        <authorList>
            <person name="Salamanca G."/>
            <person name="Rodriguez R."/>
            <person name="Quiralte J."/>
            <person name="Moreno C."/>
            <person name="Pascual C.Y."/>
            <person name="Barber D."/>
            <person name="Villalba M."/>
        </authorList>
    </citation>
    <scope>NUCLEOTIDE SEQUENCE [MRNA]</scope>
    <scope>PROTEIN SEQUENCE OF 267-276 AND 354-359</scope>
    <scope>FUNCTION</scope>
    <scope>CATALYTIC ACTIVITY</scope>
    <scope>BIOPHYSICOCHEMICAL PROPERTIES</scope>
    <scope>GLYCOSYLATION AT ASN-103</scope>
    <scope>3D-STRUCTURE MODELING</scope>
    <scope>SUBCELLULAR LOCATION</scope>
    <scope>TISSUE SPECIFICITY</scope>
    <source>
        <tissue>Pollen</tissue>
    </source>
</reference>
<reference key="2">
    <citation type="journal article" date="2012" name="J. Mol. Model.">
        <title>Structure and functional features of olive pollen pectin methylesterase using homology modeling and molecular docking methods.</title>
        <authorList>
            <person name="Jimenez-Lopez J.C."/>
            <person name="Kotchoni S.O."/>
            <person name="Rodriguez-Garcia M.I."/>
            <person name="Alche J.D."/>
        </authorList>
    </citation>
    <scope>3D-STRUCTURE MODELING</scope>
</reference>
<reference key="3">
    <citation type="journal article" date="2012" name="Talanta">
        <title>Analysis of olive allergens.</title>
        <authorList>
            <person name="Esteve C."/>
            <person name="Montealegre C."/>
            <person name="Marina M.L."/>
            <person name="Garcia M.C."/>
        </authorList>
    </citation>
    <scope>REVIEW</scope>
    <scope>NOMENCLATURE</scope>
</reference>
<dbReference type="EC" id="3.1.1.11"/>
<dbReference type="EMBL" id="GU084173">
    <property type="protein sequence ID" value="ACZ57582.1"/>
    <property type="molecule type" value="mRNA"/>
</dbReference>
<dbReference type="SMR" id="D8VPP5"/>
<dbReference type="Allergome" id="5966">
    <property type="allergen name" value="Ole e 11"/>
</dbReference>
<dbReference type="Allergome" id="8716">
    <property type="allergen name" value="Ole e 11.0101"/>
</dbReference>
<dbReference type="iPTMnet" id="D8VPP5"/>
<dbReference type="BRENDA" id="3.1.1.11">
    <property type="organism ID" value="4398"/>
</dbReference>
<dbReference type="UniPathway" id="UPA00545">
    <property type="reaction ID" value="UER00823"/>
</dbReference>
<dbReference type="GO" id="GO:0005576">
    <property type="term" value="C:extracellular region"/>
    <property type="evidence" value="ECO:0007669"/>
    <property type="project" value="UniProtKB-SubCell"/>
</dbReference>
<dbReference type="GO" id="GO:0030599">
    <property type="term" value="F:pectinesterase activity"/>
    <property type="evidence" value="ECO:0007669"/>
    <property type="project" value="UniProtKB-EC"/>
</dbReference>
<dbReference type="GO" id="GO:0042545">
    <property type="term" value="P:cell wall modification"/>
    <property type="evidence" value="ECO:0007669"/>
    <property type="project" value="InterPro"/>
</dbReference>
<dbReference type="GO" id="GO:0045490">
    <property type="term" value="P:pectin catabolic process"/>
    <property type="evidence" value="ECO:0007669"/>
    <property type="project" value="UniProtKB-UniPathway"/>
</dbReference>
<dbReference type="Gene3D" id="2.160.20.10">
    <property type="entry name" value="Single-stranded right-handed beta-helix, Pectin lyase-like"/>
    <property type="match status" value="1"/>
</dbReference>
<dbReference type="InterPro" id="IPR012334">
    <property type="entry name" value="Pectin_lyas_fold"/>
</dbReference>
<dbReference type="InterPro" id="IPR011050">
    <property type="entry name" value="Pectin_lyase_fold/virulence"/>
</dbReference>
<dbReference type="InterPro" id="IPR033131">
    <property type="entry name" value="Pectinesterase_Asp_AS"/>
</dbReference>
<dbReference type="InterPro" id="IPR000070">
    <property type="entry name" value="Pectinesterase_cat"/>
</dbReference>
<dbReference type="PANTHER" id="PTHR31321">
    <property type="entry name" value="ACYL-COA THIOESTER HYDROLASE YBHC-RELATED"/>
    <property type="match status" value="1"/>
</dbReference>
<dbReference type="PANTHER" id="PTHR31321:SF87">
    <property type="entry name" value="PECTINESTERASE 63-RELATED"/>
    <property type="match status" value="1"/>
</dbReference>
<dbReference type="Pfam" id="PF01095">
    <property type="entry name" value="Pectinesterase"/>
    <property type="match status" value="1"/>
</dbReference>
<dbReference type="SUPFAM" id="SSF51126">
    <property type="entry name" value="Pectin lyase-like"/>
    <property type="match status" value="1"/>
</dbReference>
<dbReference type="PROSITE" id="PS00503">
    <property type="entry name" value="PECTINESTERASE_2"/>
    <property type="match status" value="1"/>
</dbReference>
<organism>
    <name type="scientific">Olea europaea</name>
    <name type="common">Common olive</name>
    <dbReference type="NCBI Taxonomy" id="4146"/>
    <lineage>
        <taxon>Eukaryota</taxon>
        <taxon>Viridiplantae</taxon>
        <taxon>Streptophyta</taxon>
        <taxon>Embryophyta</taxon>
        <taxon>Tracheophyta</taxon>
        <taxon>Spermatophyta</taxon>
        <taxon>Magnoliopsida</taxon>
        <taxon>eudicotyledons</taxon>
        <taxon>Gunneridae</taxon>
        <taxon>Pentapetalae</taxon>
        <taxon>asterids</taxon>
        <taxon>lamiids</taxon>
        <taxon>Lamiales</taxon>
        <taxon>Oleaceae</taxon>
        <taxon>Oleeae</taxon>
        <taxon>Olea</taxon>
    </lineage>
</organism>
<comment type="function">
    <text evidence="2">Catalyzes the demethylesterification of homogalacturonan components of pectin. May be involved in pollen tube development.</text>
</comment>
<comment type="catalytic activity">
    <reaction evidence="2">
        <text>[(1-&gt;4)-alpha-D-galacturonosyl methyl ester](n) + n H2O = [(1-&gt;4)-alpha-D-galacturonosyl](n) + n methanol + n H(+)</text>
        <dbReference type="Rhea" id="RHEA:22380"/>
        <dbReference type="Rhea" id="RHEA-COMP:14570"/>
        <dbReference type="Rhea" id="RHEA-COMP:14573"/>
        <dbReference type="ChEBI" id="CHEBI:15377"/>
        <dbReference type="ChEBI" id="CHEBI:15378"/>
        <dbReference type="ChEBI" id="CHEBI:17790"/>
        <dbReference type="ChEBI" id="CHEBI:140522"/>
        <dbReference type="ChEBI" id="CHEBI:140523"/>
        <dbReference type="EC" id="3.1.1.11"/>
    </reaction>
</comment>
<comment type="biophysicochemical properties">
    <phDependence>
        <text evidence="2">Optimum pH is 5.5-6.0.</text>
    </phDependence>
</comment>
<comment type="pathway">
    <text>Glycan metabolism; pectin degradation; 2-dehydro-3-deoxy-D-gluconate from pectin: step 1/5.</text>
</comment>
<comment type="subcellular location">
    <subcellularLocation>
        <location evidence="2">Secreted</location>
    </subcellularLocation>
</comment>
<comment type="tissue specificity">
    <text evidence="2">Expressed in pollen.</text>
</comment>
<comment type="PTM">
    <text evidence="2">Glycosylated.</text>
</comment>
<comment type="polymorphism">
    <text>Several isoforms of the allergen exist due to polymorphism.</text>
</comment>
<comment type="allergen">
    <text>Causes an allergic reaction in human. Allergen from olive pollen. Important in Mediterranean countries and California. Its prevalence is related to the geographic area.</text>
</comment>
<comment type="similarity">
    <text evidence="3">Belongs to the pectinesterase family.</text>
</comment>
<keyword id="KW-0020">Allergen</keyword>
<keyword id="KW-0063">Aspartyl esterase</keyword>
<keyword id="KW-0903">Direct protein sequencing</keyword>
<keyword id="KW-0325">Glycoprotein</keyword>
<keyword id="KW-0378">Hydrolase</keyword>
<keyword id="KW-0964">Secreted</keyword>
<keyword id="KW-0732">Signal</keyword>
<accession>D8VPP5</accession>
<sequence>MSCIAVEAVLLGILLYIPIVLSDDRAPIPSNSAQLNSWFDGIIQPVAVRKATMDPALVTAEGQTKVIKLKSDGSGDFKSINEAIKSIPDDNTKRVILSLAPGNYSEKVKIGMYKHYITFYGEDPNNMPILVFGGTAAEYGTVDSATLIVESNYFSAVNLKIVNSAPRPDGKRVGAQAAALRISGDKASFYNVKIYGFQDTLCDDKGKHFYKDCYIEGTVDFIFGSGKSIFLNTELHAVPGDQPAIITAQARKTDSEDTGYYFVNCRVTGGGAFLGRSWMPAAKVVFAYTEMVDAIHPEGWILVKPEHESTVRFSEYNNKGPGANMEKRAKFVKRLSDAEAKQSISLGSIEASKWLLPPRVVGLP</sequence>
<protein>
    <recommendedName>
        <fullName>Pectinesterase 1</fullName>
        <ecNumber>3.1.1.11</ecNumber>
    </recommendedName>
    <alternativeName>
        <fullName>Pollen allergen Ole e 11.0101</fullName>
        <shortName>Ole e 11-1</shortName>
    </alternativeName>
    <allergenName>Ole e 11.0101</allergenName>
</protein>
<name>AL11A_OLEEU</name>
<evidence type="ECO:0000255" key="1">
    <source>
        <dbReference type="PROSITE-ProRule" id="PRU10040"/>
    </source>
</evidence>
<evidence type="ECO:0000269" key="2">
    <source>
    </source>
</evidence>
<evidence type="ECO:0000305" key="3"/>
<proteinExistence type="evidence at protein level"/>
<feature type="signal peptide">
    <location>
        <begin position="1"/>
        <end position="22"/>
    </location>
</feature>
<feature type="chain" id="PRO_0000421083" description="Pectinesterase 1">
    <location>
        <begin position="23"/>
        <end position="364"/>
    </location>
</feature>
<feature type="active site" evidence="1">
    <location>
        <position position="220"/>
    </location>
</feature>
<feature type="glycosylation site" description="N-linked (GlcNAc...) asparagine" evidence="2">
    <location>
        <position position="103"/>
    </location>
</feature>